<feature type="chain" id="PRO_0000083757" description="3-isopropylmalate dehydrogenase">
    <location>
        <begin position="1"/>
        <end position="347"/>
    </location>
</feature>
<feature type="binding site" evidence="1">
    <location>
        <begin position="76"/>
        <end position="87"/>
    </location>
    <ligand>
        <name>NAD(+)</name>
        <dbReference type="ChEBI" id="CHEBI:57540"/>
    </ligand>
</feature>
<feature type="binding site" evidence="1">
    <location>
        <position position="94"/>
    </location>
    <ligand>
        <name>substrate</name>
    </ligand>
</feature>
<feature type="binding site" evidence="1">
    <location>
        <position position="104"/>
    </location>
    <ligand>
        <name>substrate</name>
    </ligand>
</feature>
<feature type="binding site" evidence="1">
    <location>
        <position position="132"/>
    </location>
    <ligand>
        <name>substrate</name>
    </ligand>
</feature>
<feature type="binding site" evidence="1">
    <location>
        <position position="217"/>
    </location>
    <ligand>
        <name>Mg(2+)</name>
        <dbReference type="ChEBI" id="CHEBI:18420"/>
    </ligand>
</feature>
<feature type="binding site" evidence="1">
    <location>
        <position position="217"/>
    </location>
    <ligand>
        <name>substrate</name>
    </ligand>
</feature>
<feature type="binding site" evidence="1">
    <location>
        <position position="241"/>
    </location>
    <ligand>
        <name>Mg(2+)</name>
        <dbReference type="ChEBI" id="CHEBI:18420"/>
    </ligand>
</feature>
<feature type="binding site" evidence="1">
    <location>
        <position position="245"/>
    </location>
    <ligand>
        <name>Mg(2+)</name>
        <dbReference type="ChEBI" id="CHEBI:18420"/>
    </ligand>
</feature>
<feature type="binding site" evidence="1">
    <location>
        <begin position="275"/>
        <end position="287"/>
    </location>
    <ligand>
        <name>NAD(+)</name>
        <dbReference type="ChEBI" id="CHEBI:57540"/>
    </ligand>
</feature>
<feature type="site" description="Important for catalysis" evidence="1">
    <location>
        <position position="139"/>
    </location>
</feature>
<feature type="site" description="Important for catalysis" evidence="1">
    <location>
        <position position="185"/>
    </location>
</feature>
<reference key="1">
    <citation type="journal article" date="2003" name="Mol. Microbiol.">
        <title>Genome-based analysis of virulence genes in a non-biofilm-forming Staphylococcus epidermidis strain (ATCC 12228).</title>
        <authorList>
            <person name="Zhang Y.-Q."/>
            <person name="Ren S.-X."/>
            <person name="Li H.-L."/>
            <person name="Wang Y.-X."/>
            <person name="Fu G."/>
            <person name="Yang J."/>
            <person name="Qin Z.-Q."/>
            <person name="Miao Y.-G."/>
            <person name="Wang W.-Y."/>
            <person name="Chen R.-S."/>
            <person name="Shen Y."/>
            <person name="Chen Z."/>
            <person name="Yuan Z.-H."/>
            <person name="Zhao G.-P."/>
            <person name="Qu D."/>
            <person name="Danchin A."/>
            <person name="Wen Y.-M."/>
        </authorList>
    </citation>
    <scope>NUCLEOTIDE SEQUENCE [LARGE SCALE GENOMIC DNA]</scope>
    <source>
        <strain>ATCC 12228 / FDA PCI 1200</strain>
    </source>
</reference>
<evidence type="ECO:0000255" key="1">
    <source>
        <dbReference type="HAMAP-Rule" id="MF_01033"/>
    </source>
</evidence>
<comment type="function">
    <text evidence="1">Catalyzes the oxidation of 3-carboxy-2-hydroxy-4-methylpentanoate (3-isopropylmalate) to 3-carboxy-4-methyl-2-oxopentanoate. The product decarboxylates to 4-methyl-2 oxopentanoate.</text>
</comment>
<comment type="catalytic activity">
    <reaction evidence="1">
        <text>(2R,3S)-3-isopropylmalate + NAD(+) = 4-methyl-2-oxopentanoate + CO2 + NADH</text>
        <dbReference type="Rhea" id="RHEA:32271"/>
        <dbReference type="ChEBI" id="CHEBI:16526"/>
        <dbReference type="ChEBI" id="CHEBI:17865"/>
        <dbReference type="ChEBI" id="CHEBI:35121"/>
        <dbReference type="ChEBI" id="CHEBI:57540"/>
        <dbReference type="ChEBI" id="CHEBI:57945"/>
        <dbReference type="EC" id="1.1.1.85"/>
    </reaction>
</comment>
<comment type="cofactor">
    <cofactor evidence="1">
        <name>Mg(2+)</name>
        <dbReference type="ChEBI" id="CHEBI:18420"/>
    </cofactor>
    <cofactor evidence="1">
        <name>Mn(2+)</name>
        <dbReference type="ChEBI" id="CHEBI:29035"/>
    </cofactor>
    <text evidence="1">Binds 1 Mg(2+) or Mn(2+) ion per subunit.</text>
</comment>
<comment type="pathway">
    <text evidence="1">Amino-acid biosynthesis; L-leucine biosynthesis; L-leucine from 3-methyl-2-oxobutanoate: step 3/4.</text>
</comment>
<comment type="subunit">
    <text evidence="1">Homodimer.</text>
</comment>
<comment type="subcellular location">
    <subcellularLocation>
        <location evidence="1">Cytoplasm</location>
    </subcellularLocation>
</comment>
<comment type="similarity">
    <text evidence="1">Belongs to the isocitrate and isopropylmalate dehydrogenases family. LeuB type 1 subfamily.</text>
</comment>
<gene>
    <name evidence="1" type="primary">leuB</name>
    <name type="ordered locus">SE_1659</name>
</gene>
<keyword id="KW-0028">Amino-acid biosynthesis</keyword>
<keyword id="KW-0100">Branched-chain amino acid biosynthesis</keyword>
<keyword id="KW-0963">Cytoplasm</keyword>
<keyword id="KW-0432">Leucine biosynthesis</keyword>
<keyword id="KW-0460">Magnesium</keyword>
<keyword id="KW-0464">Manganese</keyword>
<keyword id="KW-0479">Metal-binding</keyword>
<keyword id="KW-0520">NAD</keyword>
<keyword id="KW-0560">Oxidoreductase</keyword>
<dbReference type="EC" id="1.1.1.85" evidence="1"/>
<dbReference type="EMBL" id="AE015929">
    <property type="protein sequence ID" value="AAO05258.1"/>
    <property type="molecule type" value="Genomic_DNA"/>
</dbReference>
<dbReference type="RefSeq" id="NP_765214.1">
    <property type="nucleotide sequence ID" value="NC_004461.1"/>
</dbReference>
<dbReference type="RefSeq" id="WP_001830006.1">
    <property type="nucleotide sequence ID" value="NZ_WBME01000022.1"/>
</dbReference>
<dbReference type="SMR" id="Q8CNL2"/>
<dbReference type="KEGG" id="sep:SE_1659"/>
<dbReference type="PATRIC" id="fig|176280.10.peg.1623"/>
<dbReference type="eggNOG" id="COG0473">
    <property type="taxonomic scope" value="Bacteria"/>
</dbReference>
<dbReference type="HOGENOM" id="CLU_031953_0_3_9"/>
<dbReference type="OrthoDB" id="9806254at2"/>
<dbReference type="UniPathway" id="UPA00048">
    <property type="reaction ID" value="UER00072"/>
</dbReference>
<dbReference type="Proteomes" id="UP000001411">
    <property type="component" value="Chromosome"/>
</dbReference>
<dbReference type="GO" id="GO:0005829">
    <property type="term" value="C:cytosol"/>
    <property type="evidence" value="ECO:0007669"/>
    <property type="project" value="TreeGrafter"/>
</dbReference>
<dbReference type="GO" id="GO:0003862">
    <property type="term" value="F:3-isopropylmalate dehydrogenase activity"/>
    <property type="evidence" value="ECO:0007669"/>
    <property type="project" value="UniProtKB-UniRule"/>
</dbReference>
<dbReference type="GO" id="GO:0000287">
    <property type="term" value="F:magnesium ion binding"/>
    <property type="evidence" value="ECO:0007669"/>
    <property type="project" value="InterPro"/>
</dbReference>
<dbReference type="GO" id="GO:0051287">
    <property type="term" value="F:NAD binding"/>
    <property type="evidence" value="ECO:0007669"/>
    <property type="project" value="InterPro"/>
</dbReference>
<dbReference type="GO" id="GO:0009098">
    <property type="term" value="P:L-leucine biosynthetic process"/>
    <property type="evidence" value="ECO:0007669"/>
    <property type="project" value="UniProtKB-UniRule"/>
</dbReference>
<dbReference type="FunFam" id="3.40.718.10:FF:000006">
    <property type="entry name" value="3-isopropylmalate dehydrogenase"/>
    <property type="match status" value="1"/>
</dbReference>
<dbReference type="Gene3D" id="3.40.718.10">
    <property type="entry name" value="Isopropylmalate Dehydrogenase"/>
    <property type="match status" value="1"/>
</dbReference>
<dbReference type="HAMAP" id="MF_01033">
    <property type="entry name" value="LeuB_type1"/>
    <property type="match status" value="1"/>
</dbReference>
<dbReference type="InterPro" id="IPR019818">
    <property type="entry name" value="IsoCit/isopropylmalate_DH_CS"/>
</dbReference>
<dbReference type="InterPro" id="IPR024084">
    <property type="entry name" value="IsoPropMal-DH-like_dom"/>
</dbReference>
<dbReference type="InterPro" id="IPR004429">
    <property type="entry name" value="Isopropylmalate_DH"/>
</dbReference>
<dbReference type="NCBIfam" id="TIGR00169">
    <property type="entry name" value="leuB"/>
    <property type="match status" value="1"/>
</dbReference>
<dbReference type="PANTHER" id="PTHR42979">
    <property type="entry name" value="3-ISOPROPYLMALATE DEHYDROGENASE"/>
    <property type="match status" value="1"/>
</dbReference>
<dbReference type="PANTHER" id="PTHR42979:SF1">
    <property type="entry name" value="3-ISOPROPYLMALATE DEHYDROGENASE"/>
    <property type="match status" value="1"/>
</dbReference>
<dbReference type="Pfam" id="PF00180">
    <property type="entry name" value="Iso_dh"/>
    <property type="match status" value="1"/>
</dbReference>
<dbReference type="SMART" id="SM01329">
    <property type="entry name" value="Iso_dh"/>
    <property type="match status" value="1"/>
</dbReference>
<dbReference type="SUPFAM" id="SSF53659">
    <property type="entry name" value="Isocitrate/Isopropylmalate dehydrogenase-like"/>
    <property type="match status" value="1"/>
</dbReference>
<dbReference type="PROSITE" id="PS00470">
    <property type="entry name" value="IDH_IMDH"/>
    <property type="match status" value="1"/>
</dbReference>
<sequence length="347" mass="38504">MSYKIVALPGDGIGPEILSGTLELLKLISEKYHFEYHLESHHFGGVSIDYYGTPLTNETLQSCKNADAILLGAIGGPKWTDPNNRPEHGLLKLRKSLNLFANIRPTFVTKGASHLSPLKQDIVEGTDLVIVRELTSGIYFGEPSYVKKTEALDSLKYSSQEIERIVRIAFNLANRRRKKLTSVDKENVLSSSKLWRQIVNDVKKDYPEVEVNHMLVDACSMHLITQPTQFDVIVTENLFGDILSDEASVIPGSLGLSPSASFGQTGTRLYEPIHGSAPDIANEDKANPFGMVLSLALCLRESLNQNDAANELESIVYSFIQSNKTTADLGGQYRTSKIFKLLKEKYL</sequence>
<accession>Q8CNL2</accession>
<protein>
    <recommendedName>
        <fullName evidence="1">3-isopropylmalate dehydrogenase</fullName>
        <ecNumber evidence="1">1.1.1.85</ecNumber>
    </recommendedName>
    <alternativeName>
        <fullName evidence="1">3-IPM-DH</fullName>
    </alternativeName>
    <alternativeName>
        <fullName evidence="1">Beta-IPM dehydrogenase</fullName>
        <shortName evidence="1">IMDH</shortName>
    </alternativeName>
</protein>
<name>LEU3_STAES</name>
<proteinExistence type="inferred from homology"/>
<organism>
    <name type="scientific">Staphylococcus epidermidis (strain ATCC 12228 / FDA PCI 1200)</name>
    <dbReference type="NCBI Taxonomy" id="176280"/>
    <lineage>
        <taxon>Bacteria</taxon>
        <taxon>Bacillati</taxon>
        <taxon>Bacillota</taxon>
        <taxon>Bacilli</taxon>
        <taxon>Bacillales</taxon>
        <taxon>Staphylococcaceae</taxon>
        <taxon>Staphylococcus</taxon>
    </lineage>
</organism>